<proteinExistence type="inferred from homology"/>
<gene>
    <name evidence="1" type="primary">gpr</name>
    <name type="ordered locus">BCA_4432</name>
</gene>
<accession>C1ESL5</accession>
<feature type="propeptide" id="PRO_1000147253" evidence="1">
    <location>
        <begin position="1"/>
        <end position="15"/>
    </location>
</feature>
<feature type="chain" id="PRO_1000147254" description="Germination protease">
    <location>
        <begin position="16"/>
        <end position="368"/>
    </location>
</feature>
<evidence type="ECO:0000255" key="1">
    <source>
        <dbReference type="HAMAP-Rule" id="MF_00626"/>
    </source>
</evidence>
<name>GPR_BACC3</name>
<sequence length="368" mass="40605">MKEPLDLSKYSVRTDLAVEAHQMLQERQEEQQQGIQGVIVKEREEEGIIITKVTIDEVASESMGKKPGNYLTLEVQGIRQQDTELQQKVERIFAKEFSYFLEEVGVTKEASCLIVGLGNWNVTPDALGPIVVENVLVTRHLFQLQPESVEEGFRPVSAIRPGVMGITGIETSDVIYGIIEKTKPDFVIAIDALAARSIERVNSTIQISDTGIHPGSGVGNKRKELSKETLGIPVIAIGVPTVVDAVSITSDTIDFILKHFGREMKEGNKPSRSLLPAGFTFGEKKKLTEEDMPDEKSRNMFLGAVGTLEDEEKRKLIYEVLSPLGHNLMVTPKEVDAFIEDMANVIASGLNAALHHQIDQDNTGAYTH</sequence>
<keyword id="KW-0378">Hydrolase</keyword>
<keyword id="KW-0645">Protease</keyword>
<keyword id="KW-0865">Zymogen</keyword>
<dbReference type="EC" id="3.4.24.78" evidence="1"/>
<dbReference type="EMBL" id="CP001407">
    <property type="protein sequence ID" value="ACO30361.1"/>
    <property type="molecule type" value="Genomic_DNA"/>
</dbReference>
<dbReference type="RefSeq" id="WP_000662639.1">
    <property type="nucleotide sequence ID" value="NZ_CP009318.1"/>
</dbReference>
<dbReference type="SMR" id="C1ESL5"/>
<dbReference type="MEROPS" id="A25.001"/>
<dbReference type="GeneID" id="45024198"/>
<dbReference type="KEGG" id="bcx:BCA_4432"/>
<dbReference type="PATRIC" id="fig|572264.18.peg.4380"/>
<dbReference type="Proteomes" id="UP000002210">
    <property type="component" value="Chromosome"/>
</dbReference>
<dbReference type="GO" id="GO:0004222">
    <property type="term" value="F:metalloendopeptidase activity"/>
    <property type="evidence" value="ECO:0007669"/>
    <property type="project" value="UniProtKB-UniRule"/>
</dbReference>
<dbReference type="GO" id="GO:0006508">
    <property type="term" value="P:proteolysis"/>
    <property type="evidence" value="ECO:0007669"/>
    <property type="project" value="UniProtKB-UniRule"/>
</dbReference>
<dbReference type="GO" id="GO:0009847">
    <property type="term" value="P:spore germination"/>
    <property type="evidence" value="ECO:0007669"/>
    <property type="project" value="UniProtKB-UniRule"/>
</dbReference>
<dbReference type="FunFam" id="3.40.50.1450:FF:000004">
    <property type="entry name" value="Germination protease"/>
    <property type="match status" value="1"/>
</dbReference>
<dbReference type="Gene3D" id="3.40.50.1450">
    <property type="entry name" value="HybD-like"/>
    <property type="match status" value="1"/>
</dbReference>
<dbReference type="HAMAP" id="MF_00626">
    <property type="entry name" value="Germination_prot"/>
    <property type="match status" value="1"/>
</dbReference>
<dbReference type="InterPro" id="IPR023430">
    <property type="entry name" value="Pept_HybD-like_dom_sf"/>
</dbReference>
<dbReference type="InterPro" id="IPR005080">
    <property type="entry name" value="Peptidase_A25"/>
</dbReference>
<dbReference type="NCBIfam" id="TIGR01441">
    <property type="entry name" value="GPR"/>
    <property type="match status" value="1"/>
</dbReference>
<dbReference type="Pfam" id="PF03418">
    <property type="entry name" value="Peptidase_A25"/>
    <property type="match status" value="1"/>
</dbReference>
<dbReference type="PIRSF" id="PIRSF019549">
    <property type="entry name" value="Peptidase_A25"/>
    <property type="match status" value="1"/>
</dbReference>
<dbReference type="SUPFAM" id="SSF53163">
    <property type="entry name" value="HybD-like"/>
    <property type="match status" value="1"/>
</dbReference>
<protein>
    <recommendedName>
        <fullName evidence="1">Germination protease</fullName>
        <ecNumber evidence="1">3.4.24.78</ecNumber>
    </recommendedName>
    <alternativeName>
        <fullName evidence="1">GPR endopeptidase</fullName>
    </alternativeName>
    <alternativeName>
        <fullName evidence="1">Germination proteinase</fullName>
    </alternativeName>
    <alternativeName>
        <fullName evidence="1">Spore protease</fullName>
    </alternativeName>
</protein>
<comment type="function">
    <text evidence="1">Initiates the rapid degradation of small, acid-soluble proteins during spore germination.</text>
</comment>
<comment type="catalytic activity">
    <reaction evidence="1">
        <text>Endopeptidase action with P4 Glu or Asp, P1 preferably Glu &gt; Asp, P1' hydrophobic and P2' Ala.</text>
        <dbReference type="EC" id="3.4.24.78"/>
    </reaction>
</comment>
<comment type="subunit">
    <text evidence="1">Homotetramer.</text>
</comment>
<comment type="PTM">
    <text evidence="1">Autoproteolytically processed. The inactive tetrameric zymogen termed p46 autoprocesses to a smaller form termed p41, which is active only during spore germination.</text>
</comment>
<comment type="similarity">
    <text evidence="1">Belongs to the peptidase A25 family.</text>
</comment>
<organism>
    <name type="scientific">Bacillus cereus (strain 03BB102)</name>
    <dbReference type="NCBI Taxonomy" id="572264"/>
    <lineage>
        <taxon>Bacteria</taxon>
        <taxon>Bacillati</taxon>
        <taxon>Bacillota</taxon>
        <taxon>Bacilli</taxon>
        <taxon>Bacillales</taxon>
        <taxon>Bacillaceae</taxon>
        <taxon>Bacillus</taxon>
        <taxon>Bacillus cereus group</taxon>
    </lineage>
</organism>
<reference key="1">
    <citation type="submission" date="2009-02" db="EMBL/GenBank/DDBJ databases">
        <title>Genome sequence of Bacillus cereus 03BB102.</title>
        <authorList>
            <person name="Dodson R.J."/>
            <person name="Jackson P."/>
            <person name="Munk A.C."/>
            <person name="Brettin T."/>
            <person name="Bruce D."/>
            <person name="Detter C."/>
            <person name="Tapia R."/>
            <person name="Han C."/>
            <person name="Sutton G."/>
            <person name="Sims D."/>
        </authorList>
    </citation>
    <scope>NUCLEOTIDE SEQUENCE [LARGE SCALE GENOMIC DNA]</scope>
    <source>
        <strain>03BB102</strain>
    </source>
</reference>